<reference key="1">
    <citation type="submission" date="2003-02" db="EMBL/GenBank/DDBJ databases">
        <title>Full-length cDNA libraries and normalization.</title>
        <authorList>
            <person name="Li W.B."/>
            <person name="Gruber C."/>
            <person name="Jessee J."/>
            <person name="Polayes D."/>
        </authorList>
    </citation>
    <scope>NUCLEOTIDE SEQUENCE [LARGE SCALE MRNA] (ISOFORM 4)</scope>
    <source>
        <tissue>Neuroblastoma</tissue>
    </source>
</reference>
<reference key="2">
    <citation type="journal article" date="2004" name="Nat. Genet.">
        <title>Complete sequencing and characterization of 21,243 full-length human cDNAs.</title>
        <authorList>
            <person name="Ota T."/>
            <person name="Suzuki Y."/>
            <person name="Nishikawa T."/>
            <person name="Otsuki T."/>
            <person name="Sugiyama T."/>
            <person name="Irie R."/>
            <person name="Wakamatsu A."/>
            <person name="Hayashi K."/>
            <person name="Sato H."/>
            <person name="Nagai K."/>
            <person name="Kimura K."/>
            <person name="Makita H."/>
            <person name="Sekine M."/>
            <person name="Obayashi M."/>
            <person name="Nishi T."/>
            <person name="Shibahara T."/>
            <person name="Tanaka T."/>
            <person name="Ishii S."/>
            <person name="Yamamoto J."/>
            <person name="Saito K."/>
            <person name="Kawai Y."/>
            <person name="Isono Y."/>
            <person name="Nakamura Y."/>
            <person name="Nagahari K."/>
            <person name="Murakami K."/>
            <person name="Yasuda T."/>
            <person name="Iwayanagi T."/>
            <person name="Wagatsuma M."/>
            <person name="Shiratori A."/>
            <person name="Sudo H."/>
            <person name="Hosoiri T."/>
            <person name="Kaku Y."/>
            <person name="Kodaira H."/>
            <person name="Kondo H."/>
            <person name="Sugawara M."/>
            <person name="Takahashi M."/>
            <person name="Kanda K."/>
            <person name="Yokoi T."/>
            <person name="Furuya T."/>
            <person name="Kikkawa E."/>
            <person name="Omura Y."/>
            <person name="Abe K."/>
            <person name="Kamihara K."/>
            <person name="Katsuta N."/>
            <person name="Sato K."/>
            <person name="Tanikawa M."/>
            <person name="Yamazaki M."/>
            <person name="Ninomiya K."/>
            <person name="Ishibashi T."/>
            <person name="Yamashita H."/>
            <person name="Murakawa K."/>
            <person name="Fujimori K."/>
            <person name="Tanai H."/>
            <person name="Kimata M."/>
            <person name="Watanabe M."/>
            <person name="Hiraoka S."/>
            <person name="Chiba Y."/>
            <person name="Ishida S."/>
            <person name="Ono Y."/>
            <person name="Takiguchi S."/>
            <person name="Watanabe S."/>
            <person name="Yosida M."/>
            <person name="Hotuta T."/>
            <person name="Kusano J."/>
            <person name="Kanehori K."/>
            <person name="Takahashi-Fujii A."/>
            <person name="Hara H."/>
            <person name="Tanase T.-O."/>
            <person name="Nomura Y."/>
            <person name="Togiya S."/>
            <person name="Komai F."/>
            <person name="Hara R."/>
            <person name="Takeuchi K."/>
            <person name="Arita M."/>
            <person name="Imose N."/>
            <person name="Musashino K."/>
            <person name="Yuuki H."/>
            <person name="Oshima A."/>
            <person name="Sasaki N."/>
            <person name="Aotsuka S."/>
            <person name="Yoshikawa Y."/>
            <person name="Matsunawa H."/>
            <person name="Ichihara T."/>
            <person name="Shiohata N."/>
            <person name="Sano S."/>
            <person name="Moriya S."/>
            <person name="Momiyama H."/>
            <person name="Satoh N."/>
            <person name="Takami S."/>
            <person name="Terashima Y."/>
            <person name="Suzuki O."/>
            <person name="Nakagawa S."/>
            <person name="Senoh A."/>
            <person name="Mizoguchi H."/>
            <person name="Goto Y."/>
            <person name="Shimizu F."/>
            <person name="Wakebe H."/>
            <person name="Hishigaki H."/>
            <person name="Watanabe T."/>
            <person name="Sugiyama A."/>
            <person name="Takemoto M."/>
            <person name="Kawakami B."/>
            <person name="Yamazaki M."/>
            <person name="Watanabe K."/>
            <person name="Kumagai A."/>
            <person name="Itakura S."/>
            <person name="Fukuzumi Y."/>
            <person name="Fujimori Y."/>
            <person name="Komiyama M."/>
            <person name="Tashiro H."/>
            <person name="Tanigami A."/>
            <person name="Fujiwara T."/>
            <person name="Ono T."/>
            <person name="Yamada K."/>
            <person name="Fujii Y."/>
            <person name="Ozaki K."/>
            <person name="Hirao M."/>
            <person name="Ohmori Y."/>
            <person name="Kawabata A."/>
            <person name="Hikiji T."/>
            <person name="Kobatake N."/>
            <person name="Inagaki H."/>
            <person name="Ikema Y."/>
            <person name="Okamoto S."/>
            <person name="Okitani R."/>
            <person name="Kawakami T."/>
            <person name="Noguchi S."/>
            <person name="Itoh T."/>
            <person name="Shigeta K."/>
            <person name="Senba T."/>
            <person name="Matsumura K."/>
            <person name="Nakajima Y."/>
            <person name="Mizuno T."/>
            <person name="Morinaga M."/>
            <person name="Sasaki M."/>
            <person name="Togashi T."/>
            <person name="Oyama M."/>
            <person name="Hata H."/>
            <person name="Watanabe M."/>
            <person name="Komatsu T."/>
            <person name="Mizushima-Sugano J."/>
            <person name="Satoh T."/>
            <person name="Shirai Y."/>
            <person name="Takahashi Y."/>
            <person name="Nakagawa K."/>
            <person name="Okumura K."/>
            <person name="Nagase T."/>
            <person name="Nomura N."/>
            <person name="Kikuchi H."/>
            <person name="Masuho Y."/>
            <person name="Yamashita R."/>
            <person name="Nakai K."/>
            <person name="Yada T."/>
            <person name="Nakamura Y."/>
            <person name="Ohara O."/>
            <person name="Isogai T."/>
            <person name="Sugano S."/>
        </authorList>
    </citation>
    <scope>NUCLEOTIDE SEQUENCE [LARGE SCALE MRNA] (ISOFORM 7)</scope>
</reference>
<reference key="3">
    <citation type="journal article" date="2003" name="Nature">
        <title>The DNA sequence and analysis of human chromosome 14.</title>
        <authorList>
            <person name="Heilig R."/>
            <person name="Eckenberg R."/>
            <person name="Petit J.-L."/>
            <person name="Fonknechten N."/>
            <person name="Da Silva C."/>
            <person name="Cattolico L."/>
            <person name="Levy M."/>
            <person name="Barbe V."/>
            <person name="De Berardinis V."/>
            <person name="Ureta-Vidal A."/>
            <person name="Pelletier E."/>
            <person name="Vico V."/>
            <person name="Anthouard V."/>
            <person name="Rowen L."/>
            <person name="Madan A."/>
            <person name="Qin S."/>
            <person name="Sun H."/>
            <person name="Du H."/>
            <person name="Pepin K."/>
            <person name="Artiguenave F."/>
            <person name="Robert C."/>
            <person name="Cruaud C."/>
            <person name="Bruels T."/>
            <person name="Jaillon O."/>
            <person name="Friedlander L."/>
            <person name="Samson G."/>
            <person name="Brottier P."/>
            <person name="Cure S."/>
            <person name="Segurens B."/>
            <person name="Aniere F."/>
            <person name="Samain S."/>
            <person name="Crespeau H."/>
            <person name="Abbasi N."/>
            <person name="Aiach N."/>
            <person name="Boscus D."/>
            <person name="Dickhoff R."/>
            <person name="Dors M."/>
            <person name="Dubois I."/>
            <person name="Friedman C."/>
            <person name="Gouyvenoux M."/>
            <person name="James R."/>
            <person name="Madan A."/>
            <person name="Mairey-Estrada B."/>
            <person name="Mangenot S."/>
            <person name="Martins N."/>
            <person name="Menard M."/>
            <person name="Oztas S."/>
            <person name="Ratcliffe A."/>
            <person name="Shaffer T."/>
            <person name="Trask B."/>
            <person name="Vacherie B."/>
            <person name="Bellemere C."/>
            <person name="Belser C."/>
            <person name="Besnard-Gonnet M."/>
            <person name="Bartol-Mavel D."/>
            <person name="Boutard M."/>
            <person name="Briez-Silla S."/>
            <person name="Combette S."/>
            <person name="Dufosse-Laurent V."/>
            <person name="Ferron C."/>
            <person name="Lechaplais C."/>
            <person name="Louesse C."/>
            <person name="Muselet D."/>
            <person name="Magdelenat G."/>
            <person name="Pateau E."/>
            <person name="Petit E."/>
            <person name="Sirvain-Trukniewicz P."/>
            <person name="Trybou A."/>
            <person name="Vega-Czarny N."/>
            <person name="Bataille E."/>
            <person name="Bluet E."/>
            <person name="Bordelais I."/>
            <person name="Dubois M."/>
            <person name="Dumont C."/>
            <person name="Guerin T."/>
            <person name="Haffray S."/>
            <person name="Hammadi R."/>
            <person name="Muanga J."/>
            <person name="Pellouin V."/>
            <person name="Robert D."/>
            <person name="Wunderle E."/>
            <person name="Gauguet G."/>
            <person name="Roy A."/>
            <person name="Sainte-Marthe L."/>
            <person name="Verdier J."/>
            <person name="Verdier-Discala C."/>
            <person name="Hillier L.W."/>
            <person name="Fulton L."/>
            <person name="McPherson J."/>
            <person name="Matsuda F."/>
            <person name="Wilson R."/>
            <person name="Scarpelli C."/>
            <person name="Gyapay G."/>
            <person name="Wincker P."/>
            <person name="Saurin W."/>
            <person name="Quetier F."/>
            <person name="Waterston R."/>
            <person name="Hood L."/>
            <person name="Weissenbach J."/>
        </authorList>
    </citation>
    <scope>NUCLEOTIDE SEQUENCE [LARGE SCALE GENOMIC DNA]</scope>
</reference>
<reference key="4">
    <citation type="journal article" date="2004" name="Genome Res.">
        <title>The status, quality, and expansion of the NIH full-length cDNA project: the Mammalian Gene Collection (MGC).</title>
        <authorList>
            <consortium name="The MGC Project Team"/>
        </authorList>
    </citation>
    <scope>NUCLEOTIDE SEQUENCE [LARGE SCALE MRNA] (ISOFORMS 1 AND 3)</scope>
    <scope>VARIANT HIS-159</scope>
    <source>
        <tissue>Testis</tissue>
    </source>
</reference>
<reference key="5">
    <citation type="submission" date="2000-12" db="EMBL/GenBank/DDBJ databases">
        <authorList>
            <person name="Li N."/>
            <person name="Chen T."/>
            <person name="Wan T."/>
            <person name="Zhang W."/>
            <person name="Cao X."/>
        </authorList>
    </citation>
    <scope>NUCLEOTIDE SEQUENCE [MRNA] OF 2-569 (ISOFORM 2)</scope>
</reference>
<reference key="6">
    <citation type="journal article" date="2007" name="BMC Genomics">
        <title>The full-ORF clone resource of the German cDNA consortium.</title>
        <authorList>
            <person name="Bechtel S."/>
            <person name="Rosenfelder H."/>
            <person name="Duda A."/>
            <person name="Schmidt C.P."/>
            <person name="Ernst U."/>
            <person name="Wellenreuther R."/>
            <person name="Mehrle A."/>
            <person name="Schuster C."/>
            <person name="Bahr A."/>
            <person name="Bloecker H."/>
            <person name="Heubner D."/>
            <person name="Hoerlein A."/>
            <person name="Michel G."/>
            <person name="Wedler H."/>
            <person name="Koehrer K."/>
            <person name="Ottenwaelder B."/>
            <person name="Poustka A."/>
            <person name="Wiemann S."/>
            <person name="Schupp I."/>
        </authorList>
    </citation>
    <scope>NUCLEOTIDE SEQUENCE [LARGE SCALE MRNA] OF 232-569 (ISOFORM 1)</scope>
    <source>
        <tissue>Testis</tissue>
    </source>
</reference>
<reference key="7">
    <citation type="journal article" date="2008" name="Proc. Natl. Acad. Sci. U.S.A.">
        <title>A quantitative atlas of mitotic phosphorylation.</title>
        <authorList>
            <person name="Dephoure N."/>
            <person name="Zhou C."/>
            <person name="Villen J."/>
            <person name="Beausoleil S.A."/>
            <person name="Bakalarski C.E."/>
            <person name="Elledge S.J."/>
            <person name="Gygi S.P."/>
        </authorList>
    </citation>
    <scope>PHOSPHORYLATION [LARGE SCALE ANALYSIS] AT SER-432 AND SER-434</scope>
    <scope>IDENTIFICATION BY MASS SPECTROMETRY [LARGE SCALE ANALYSIS]</scope>
    <source>
        <tissue>Cervix carcinoma</tissue>
    </source>
</reference>
<reference key="8">
    <citation type="journal article" date="2009" name="Sci. Signal.">
        <title>Quantitative phosphoproteomic analysis of T cell receptor signaling reveals system-wide modulation of protein-protein interactions.</title>
        <authorList>
            <person name="Mayya V."/>
            <person name="Lundgren D.H."/>
            <person name="Hwang S.-I."/>
            <person name="Rezaul K."/>
            <person name="Wu L."/>
            <person name="Eng J.K."/>
            <person name="Rodionov V."/>
            <person name="Han D.K."/>
        </authorList>
    </citation>
    <scope>PHOSPHORYLATION [LARGE SCALE ANALYSIS] AT SER-434</scope>
    <scope>IDENTIFICATION BY MASS SPECTROMETRY [LARGE SCALE ANALYSIS]</scope>
    <source>
        <tissue>Leukemic T-cell</tissue>
    </source>
</reference>
<reference key="9">
    <citation type="journal article" date="2010" name="J. Biol. Chem.">
        <title>WDR20 regulates activity of the USP12 x UAF1 deubiquitinating enzyme complex.</title>
        <authorList>
            <person name="Kee Y."/>
            <person name="Yang K."/>
            <person name="Cohn M.A."/>
            <person name="Haas W."/>
            <person name="Gygi S.P."/>
            <person name="D'Andrea A.D."/>
        </authorList>
    </citation>
    <scope>INTERACTION WITH USP12 AND USP46</scope>
    <scope>FUNCTION</scope>
    <scope>SUBUNIT</scope>
</reference>
<reference key="10">
    <citation type="journal article" date="2010" name="Sci. Signal.">
        <title>Quantitative phosphoproteomics reveals widespread full phosphorylation site occupancy during mitosis.</title>
        <authorList>
            <person name="Olsen J.V."/>
            <person name="Vermeulen M."/>
            <person name="Santamaria A."/>
            <person name="Kumar C."/>
            <person name="Miller M.L."/>
            <person name="Jensen L.J."/>
            <person name="Gnad F."/>
            <person name="Cox J."/>
            <person name="Jensen T.S."/>
            <person name="Nigg E.A."/>
            <person name="Brunak S."/>
            <person name="Mann M."/>
        </authorList>
    </citation>
    <scope>IDENTIFICATION BY MASS SPECTROMETRY [LARGE SCALE ANALYSIS]</scope>
    <source>
        <tissue>Cervix carcinoma</tissue>
    </source>
</reference>
<reference key="11">
    <citation type="journal article" date="2011" name="Sci. Signal.">
        <title>System-wide temporal characterization of the proteome and phosphoproteome of human embryonic stem cell differentiation.</title>
        <authorList>
            <person name="Rigbolt K.T."/>
            <person name="Prokhorova T.A."/>
            <person name="Akimov V."/>
            <person name="Henningsen J."/>
            <person name="Johansen P.T."/>
            <person name="Kratchmarova I."/>
            <person name="Kassem M."/>
            <person name="Mann M."/>
            <person name="Olsen J.V."/>
            <person name="Blagoev B."/>
        </authorList>
    </citation>
    <scope>PHOSPHORYLATION [LARGE SCALE ANALYSIS] AT SER-432</scope>
    <scope>IDENTIFICATION BY MASS SPECTROMETRY [LARGE SCALE ANALYSIS]</scope>
</reference>
<reference key="12">
    <citation type="journal article" date="2012" name="Proc. Natl. Acad. Sci. U.S.A.">
        <title>N-terminal acetylome analyses and functional insights of the N-terminal acetyltransferase NatB.</title>
        <authorList>
            <person name="Van Damme P."/>
            <person name="Lasa M."/>
            <person name="Polevoda B."/>
            <person name="Gazquez C."/>
            <person name="Elosegui-Artola A."/>
            <person name="Kim D.S."/>
            <person name="De Juan-Pardo E."/>
            <person name="Demeyer K."/>
            <person name="Hole K."/>
            <person name="Larrea E."/>
            <person name="Timmerman E."/>
            <person name="Prieto J."/>
            <person name="Arnesen T."/>
            <person name="Sherman F."/>
            <person name="Gevaert K."/>
            <person name="Aldabe R."/>
        </authorList>
    </citation>
    <scope>ACETYLATION [LARGE SCALE ANALYSIS] AT ALA-2</scope>
    <scope>CLEAVAGE OF INITIATOR METHIONINE [LARGE SCALE ANALYSIS]</scope>
    <scope>IDENTIFICATION BY MASS SPECTROMETRY [LARGE SCALE ANALYSIS]</scope>
</reference>
<reference key="13">
    <citation type="journal article" date="2013" name="J. Proteome Res.">
        <title>Toward a comprehensive characterization of a human cancer cell phosphoproteome.</title>
        <authorList>
            <person name="Zhou H."/>
            <person name="Di Palma S."/>
            <person name="Preisinger C."/>
            <person name="Peng M."/>
            <person name="Polat A.N."/>
            <person name="Heck A.J."/>
            <person name="Mohammed S."/>
        </authorList>
    </citation>
    <scope>PHOSPHORYLATION [LARGE SCALE ANALYSIS] AT SER-357; SER-360; SER-434 AND SER-465</scope>
    <scope>IDENTIFICATION BY MASS SPECTROMETRY [LARGE SCALE ANALYSIS]</scope>
    <source>
        <tissue>Cervix carcinoma</tissue>
        <tissue>Erythroleukemia</tissue>
    </source>
</reference>
<reference key="14">
    <citation type="journal article" date="2014" name="J. Proteomics">
        <title>An enzyme assisted RP-RPLC approach for in-depth analysis of human liver phosphoproteome.</title>
        <authorList>
            <person name="Bian Y."/>
            <person name="Song C."/>
            <person name="Cheng K."/>
            <person name="Dong M."/>
            <person name="Wang F."/>
            <person name="Huang J."/>
            <person name="Sun D."/>
            <person name="Wang L."/>
            <person name="Ye M."/>
            <person name="Zou H."/>
        </authorList>
    </citation>
    <scope>IDENTIFICATION BY MASS SPECTROMETRY [LARGE SCALE ANALYSIS]</scope>
    <source>
        <tissue>Liver</tissue>
    </source>
</reference>
<reference key="15">
    <citation type="journal article" date="2019" name="Eur. J. Cell Biol.">
        <title>WDR20 regulates shuttling of the USP12 deubiquitinase complex between the plasma membrane, cytoplasm and nucleus.</title>
        <authorList>
            <person name="Olazabal-Herrero A."/>
            <person name="Sendino M."/>
            <person name="Arganda-Carreras I."/>
            <person name="Rodriguez J.A."/>
        </authorList>
    </citation>
    <scope>FUNCTION</scope>
    <scope>SUBCELLULAR LOCATION</scope>
    <scope>MUTAGENESIS OF PHE-262; TRP-306; LEU-464 AND LEU-466</scope>
</reference>
<reference key="16">
    <citation type="journal article" date="2021" name="FEBS J.">
        <title>The dystrophia myotonica WD repeat-containing protein DMWD and WDR20 differentially regulate USP12 deubiquitinase.</title>
        <authorList>
            <person name="Olazabal-Herrero A."/>
            <person name="Bilbao-Arribas M."/>
            <person name="Carlevaris O."/>
            <person name="Sendino M."/>
            <person name="Varela-Martinez E."/>
            <person name="Jugo B.M."/>
            <person name="Berra E."/>
            <person name="Rodriguez J.A."/>
        </authorList>
    </citation>
    <scope>SUBCELLULAR LOCATION</scope>
    <scope>SUBUNIT</scope>
    <scope>MUTAGENESIS OF PHE-262 AND TRP-306</scope>
</reference>
<reference evidence="12 13" key="17">
    <citation type="journal article" date="2016" name="Mol. Cell">
        <title>Allosteric activation of ubiquitin-specific proteases by beta-propeller proteins UAF1 and WDR20.</title>
        <authorList>
            <person name="Li H."/>
            <person name="Lim K.S."/>
            <person name="Kim H."/>
            <person name="Hinds T.R."/>
            <person name="Jo U."/>
            <person name="Mao H."/>
            <person name="Weller C.E."/>
            <person name="Sun J."/>
            <person name="Chatterjee C."/>
            <person name="D'Andrea A.D."/>
            <person name="Zheng N."/>
        </authorList>
    </citation>
    <scope>X-RAY CRYSTALLOGRAPHY (2.60 ANGSTROMS) IN COMPLEX WITH USP12 AND WDR48</scope>
    <scope>INTERACTION WITH USP12</scope>
    <scope>FUNCTION</scope>
    <scope>MUTAGENESIS OF PHE-262 AND TRP-306</scope>
</reference>
<keyword id="KW-0002">3D-structure</keyword>
<keyword id="KW-0007">Acetylation</keyword>
<keyword id="KW-0025">Alternative splicing</keyword>
<keyword id="KW-0963">Cytoplasm</keyword>
<keyword id="KW-0539">Nucleus</keyword>
<keyword id="KW-0597">Phosphoprotein</keyword>
<keyword id="KW-1267">Proteomics identification</keyword>
<keyword id="KW-1185">Reference proteome</keyword>
<keyword id="KW-0677">Repeat</keyword>
<keyword id="KW-0853">WD repeat</keyword>
<evidence type="ECO:0000256" key="1">
    <source>
        <dbReference type="SAM" id="MobiDB-lite"/>
    </source>
</evidence>
<evidence type="ECO:0000269" key="2">
    <source>
    </source>
</evidence>
<evidence type="ECO:0000269" key="3">
    <source>
    </source>
</evidence>
<evidence type="ECO:0000269" key="4">
    <source>
    </source>
</evidence>
<evidence type="ECO:0000269" key="5">
    <source>
    </source>
</evidence>
<evidence type="ECO:0000269" key="6">
    <source>
    </source>
</evidence>
<evidence type="ECO:0000303" key="7">
    <source>
    </source>
</evidence>
<evidence type="ECO:0000303" key="8">
    <source>
    </source>
</evidence>
<evidence type="ECO:0000303" key="9">
    <source ref="1"/>
</evidence>
<evidence type="ECO:0000303" key="10">
    <source ref="5"/>
</evidence>
<evidence type="ECO:0000305" key="11"/>
<evidence type="ECO:0007744" key="12">
    <source>
        <dbReference type="PDB" id="5K19"/>
    </source>
</evidence>
<evidence type="ECO:0007744" key="13">
    <source>
        <dbReference type="PDB" id="5K1C"/>
    </source>
</evidence>
<evidence type="ECO:0007744" key="14">
    <source>
    </source>
</evidence>
<evidence type="ECO:0007744" key="15">
    <source>
    </source>
</evidence>
<evidence type="ECO:0007744" key="16">
    <source>
    </source>
</evidence>
<evidence type="ECO:0007744" key="17">
    <source>
    </source>
</evidence>
<evidence type="ECO:0007744" key="18">
    <source>
    </source>
</evidence>
<evidence type="ECO:0007829" key="19">
    <source>
        <dbReference type="PDB" id="5K19"/>
    </source>
</evidence>
<evidence type="ECO:0007829" key="20">
    <source>
        <dbReference type="PDB" id="5K1C"/>
    </source>
</evidence>
<accession>Q8TBZ3</accession>
<accession>B4DN18</accession>
<accession>E7EUY8</accession>
<accession>F8W9S4</accession>
<accession>G3V2F8</accession>
<accession>G3V5R0</accession>
<accession>H0YJJ1</accession>
<accession>Q86TU2</accession>
<accession>Q8NCN7</accession>
<accession>Q8WXX2</accession>
<accession>Q9UF86</accession>
<dbReference type="EMBL" id="BX248274">
    <property type="protein sequence ID" value="CAD62602.1"/>
    <property type="molecule type" value="mRNA"/>
</dbReference>
<dbReference type="EMBL" id="AK297727">
    <property type="protein sequence ID" value="BAG60080.1"/>
    <property type="molecule type" value="mRNA"/>
</dbReference>
<dbReference type="EMBL" id="AL133223">
    <property type="status" value="NOT_ANNOTATED_CDS"/>
    <property type="molecule type" value="Genomic_DNA"/>
</dbReference>
<dbReference type="EMBL" id="AL359402">
    <property type="status" value="NOT_ANNOTATED_CDS"/>
    <property type="molecule type" value="Genomic_DNA"/>
</dbReference>
<dbReference type="EMBL" id="BC028387">
    <property type="protein sequence ID" value="AAH28387.1"/>
    <property type="molecule type" value="mRNA"/>
</dbReference>
<dbReference type="EMBL" id="BC030654">
    <property type="protein sequence ID" value="AAH30654.1"/>
    <property type="molecule type" value="mRNA"/>
</dbReference>
<dbReference type="EMBL" id="AF327354">
    <property type="protein sequence ID" value="AAL56014.1"/>
    <property type="status" value="ALT_INIT"/>
    <property type="molecule type" value="mRNA"/>
</dbReference>
<dbReference type="EMBL" id="AL133558">
    <property type="protein sequence ID" value="CAB63713.1"/>
    <property type="molecule type" value="mRNA"/>
</dbReference>
<dbReference type="CCDS" id="CCDS55942.1">
    <molecule id="Q8TBZ3-8"/>
</dbReference>
<dbReference type="CCDS" id="CCDS55943.1">
    <molecule id="Q8TBZ3-7"/>
</dbReference>
<dbReference type="CCDS" id="CCDS55944.1">
    <molecule id="Q8TBZ3-3"/>
</dbReference>
<dbReference type="CCDS" id="CCDS55945.1">
    <molecule id="Q8TBZ3-6"/>
</dbReference>
<dbReference type="CCDS" id="CCDS9968.1">
    <molecule id="Q8TBZ3-2"/>
</dbReference>
<dbReference type="CCDS" id="CCDS9969.1">
    <molecule id="Q8TBZ3-1"/>
</dbReference>
<dbReference type="CCDS" id="CCDS9970.1">
    <molecule id="Q8TBZ3-5"/>
</dbReference>
<dbReference type="PIR" id="T43440">
    <property type="entry name" value="T43440"/>
</dbReference>
<dbReference type="RefSeq" id="NP_001229343.1">
    <molecule id="Q8TBZ3-8"/>
    <property type="nucleotide sequence ID" value="NM_001242414.2"/>
</dbReference>
<dbReference type="RefSeq" id="NP_001229344.1">
    <molecule id="Q8TBZ3-3"/>
    <property type="nucleotide sequence ID" value="NM_001242415.2"/>
</dbReference>
<dbReference type="RefSeq" id="NP_001229345.1">
    <molecule id="Q8TBZ3-6"/>
    <property type="nucleotide sequence ID" value="NM_001242416.2"/>
</dbReference>
<dbReference type="RefSeq" id="NP_001229346.1">
    <molecule id="Q8TBZ3-7"/>
    <property type="nucleotide sequence ID" value="NM_001242417.2"/>
</dbReference>
<dbReference type="RefSeq" id="NP_001229347.1">
    <property type="nucleotide sequence ID" value="NM_001242418.1"/>
</dbReference>
<dbReference type="RefSeq" id="NP_001340610.1">
    <molecule id="Q8TBZ3-8"/>
    <property type="nucleotide sequence ID" value="NM_001353681.2"/>
</dbReference>
<dbReference type="RefSeq" id="NP_653175.2">
    <molecule id="Q8TBZ3-1"/>
    <property type="nucleotide sequence ID" value="NM_144574.3"/>
</dbReference>
<dbReference type="RefSeq" id="NP_851808.1">
    <molecule id="Q8TBZ3-2"/>
    <property type="nucleotide sequence ID" value="NM_181291.3"/>
</dbReference>
<dbReference type="RefSeq" id="NP_851825.1">
    <molecule id="Q8TBZ3-5"/>
    <property type="nucleotide sequence ID" value="NM_181308.3"/>
</dbReference>
<dbReference type="PDB" id="5K19">
    <property type="method" value="X-ray"/>
    <property type="resolution" value="2.60 A"/>
    <property type="chains" value="A/B/C=1-569"/>
</dbReference>
<dbReference type="PDB" id="5K1C">
    <property type="method" value="X-ray"/>
    <property type="resolution" value="3.00 A"/>
    <property type="chains" value="C=1-569"/>
</dbReference>
<dbReference type="PDB" id="6JLQ">
    <property type="method" value="X-ray"/>
    <property type="resolution" value="3.10 A"/>
    <property type="chains" value="C=279-318"/>
</dbReference>
<dbReference type="PDBsum" id="5K19"/>
<dbReference type="PDBsum" id="5K1C"/>
<dbReference type="PDBsum" id="6JLQ"/>
<dbReference type="SMR" id="Q8TBZ3"/>
<dbReference type="BioGRID" id="124884">
    <property type="interactions" value="93"/>
</dbReference>
<dbReference type="ComplexPortal" id="CPX-9281">
    <property type="entry name" value="USP46 deubiquitinase complex"/>
</dbReference>
<dbReference type="ComplexPortal" id="CPX-9361">
    <property type="entry name" value="USP12-WDR20 deubiquitinase complex"/>
</dbReference>
<dbReference type="CORUM" id="Q8TBZ3"/>
<dbReference type="FunCoup" id="Q8TBZ3">
    <property type="interactions" value="3245"/>
</dbReference>
<dbReference type="IntAct" id="Q8TBZ3">
    <property type="interactions" value="60"/>
</dbReference>
<dbReference type="MINT" id="Q8TBZ3"/>
<dbReference type="STRING" id="9606.ENSP00000395793"/>
<dbReference type="ChEMBL" id="CHEMBL5291970"/>
<dbReference type="ChEMBL" id="CHEMBL5291973"/>
<dbReference type="iPTMnet" id="Q8TBZ3"/>
<dbReference type="PhosphoSitePlus" id="Q8TBZ3"/>
<dbReference type="BioMuta" id="WDR20"/>
<dbReference type="DMDM" id="143811476"/>
<dbReference type="jPOST" id="Q8TBZ3"/>
<dbReference type="MassIVE" id="Q8TBZ3"/>
<dbReference type="PaxDb" id="9606-ENSP00000406084"/>
<dbReference type="PeptideAtlas" id="Q8TBZ3"/>
<dbReference type="ProteomicsDB" id="18529"/>
<dbReference type="ProteomicsDB" id="30372"/>
<dbReference type="ProteomicsDB" id="32621"/>
<dbReference type="ProteomicsDB" id="39351"/>
<dbReference type="ProteomicsDB" id="74057">
    <molecule id="Q8TBZ3-1"/>
</dbReference>
<dbReference type="ProteomicsDB" id="74058">
    <molecule id="Q8TBZ3-2"/>
</dbReference>
<dbReference type="ProteomicsDB" id="74059">
    <molecule id="Q8TBZ3-3"/>
</dbReference>
<dbReference type="Pumba" id="Q8TBZ3"/>
<dbReference type="Antibodypedia" id="134">
    <property type="antibodies" value="112 antibodies from 22 providers"/>
</dbReference>
<dbReference type="DNASU" id="91833"/>
<dbReference type="Ensembl" id="ENST00000299135.6">
    <molecule id="Q8TBZ3-8"/>
    <property type="protein sequence ID" value="ENSP00000299135.6"/>
    <property type="gene ID" value="ENSG00000140153.18"/>
</dbReference>
<dbReference type="Ensembl" id="ENST00000322340.9">
    <molecule id="Q8TBZ3-3"/>
    <property type="protein sequence ID" value="ENSP00000314209.5"/>
    <property type="gene ID" value="ENSG00000140153.18"/>
</dbReference>
<dbReference type="Ensembl" id="ENST00000335263.9">
    <molecule id="Q8TBZ3-2"/>
    <property type="protein sequence ID" value="ENSP00000335434.5"/>
    <property type="gene ID" value="ENSG00000140153.18"/>
</dbReference>
<dbReference type="Ensembl" id="ENST00000342702.8">
    <molecule id="Q8TBZ3-1"/>
    <property type="protein sequence ID" value="ENSP00000341037.3"/>
    <property type="gene ID" value="ENSG00000140153.18"/>
</dbReference>
<dbReference type="Ensembl" id="ENST00000454394.2">
    <molecule id="Q8TBZ3-7"/>
    <property type="protein sequence ID" value="ENSP00000406084.2"/>
    <property type="gene ID" value="ENSG00000140153.18"/>
</dbReference>
<dbReference type="Ensembl" id="ENST00000555879.5">
    <molecule id="Q8TBZ3-8"/>
    <property type="protein sequence ID" value="ENSP00000452470.1"/>
    <property type="gene ID" value="ENSG00000140153.18"/>
</dbReference>
<dbReference type="Ensembl" id="ENST00000556511.2">
    <molecule id="Q8TBZ3-5"/>
    <property type="protein sequence ID" value="ENSP00000451633.2"/>
    <property type="gene ID" value="ENSG00000140153.18"/>
</dbReference>
<dbReference type="Ensembl" id="ENST00000556807.1">
    <molecule id="Q8TBZ3-6"/>
    <property type="protein sequence ID" value="ENSP00000450636.1"/>
    <property type="gene ID" value="ENSG00000140153.18"/>
</dbReference>
<dbReference type="GeneID" id="91833"/>
<dbReference type="KEGG" id="hsa:91833"/>
<dbReference type="MANE-Select" id="ENST00000342702.8">
    <property type="protein sequence ID" value="ENSP00000341037.3"/>
    <property type="RefSeq nucleotide sequence ID" value="NM_144574.4"/>
    <property type="RefSeq protein sequence ID" value="NP_653175.2"/>
</dbReference>
<dbReference type="UCSC" id="uc001ykz.4">
    <molecule id="Q8TBZ3-1"/>
    <property type="organism name" value="human"/>
</dbReference>
<dbReference type="AGR" id="HGNC:19667"/>
<dbReference type="CTD" id="91833"/>
<dbReference type="DisGeNET" id="91833"/>
<dbReference type="GeneCards" id="WDR20"/>
<dbReference type="HGNC" id="HGNC:19667">
    <property type="gene designation" value="WDR20"/>
</dbReference>
<dbReference type="HPA" id="ENSG00000140153">
    <property type="expression patterns" value="Low tissue specificity"/>
</dbReference>
<dbReference type="MIM" id="617741">
    <property type="type" value="gene"/>
</dbReference>
<dbReference type="neXtProt" id="NX_Q8TBZ3"/>
<dbReference type="OpenTargets" id="ENSG00000140153"/>
<dbReference type="PharmGKB" id="PA134936678"/>
<dbReference type="VEuPathDB" id="HostDB:ENSG00000140153"/>
<dbReference type="eggNOG" id="KOG2394">
    <property type="taxonomic scope" value="Eukaryota"/>
</dbReference>
<dbReference type="GeneTree" id="ENSGT00390000007686"/>
<dbReference type="HOGENOM" id="CLU_120535_0_0_1"/>
<dbReference type="InParanoid" id="Q8TBZ3"/>
<dbReference type="OrthoDB" id="3367at2759"/>
<dbReference type="PAN-GO" id="Q8TBZ3">
    <property type="GO annotations" value="0 GO annotations based on evolutionary models"/>
</dbReference>
<dbReference type="PhylomeDB" id="Q8TBZ3"/>
<dbReference type="TreeFam" id="TF314961"/>
<dbReference type="PathwayCommons" id="Q8TBZ3"/>
<dbReference type="Reactome" id="R-HSA-5689880">
    <property type="pathway name" value="Ub-specific processing proteases"/>
</dbReference>
<dbReference type="SignaLink" id="Q8TBZ3"/>
<dbReference type="BioGRID-ORCS" id="91833">
    <property type="hits" value="36 hits in 1173 CRISPR screens"/>
</dbReference>
<dbReference type="ChiTaRS" id="WDR20">
    <property type="organism name" value="human"/>
</dbReference>
<dbReference type="GenomeRNAi" id="91833"/>
<dbReference type="Pharos" id="Q8TBZ3">
    <property type="development level" value="Tbio"/>
</dbReference>
<dbReference type="PRO" id="PR:Q8TBZ3"/>
<dbReference type="Proteomes" id="UP000005640">
    <property type="component" value="Chromosome 14"/>
</dbReference>
<dbReference type="RNAct" id="Q8TBZ3">
    <property type="molecule type" value="protein"/>
</dbReference>
<dbReference type="Bgee" id="ENSG00000140153">
    <property type="expression patterns" value="Expressed in secondary oocyte and 174 other cell types or tissues"/>
</dbReference>
<dbReference type="ExpressionAtlas" id="Q8TBZ3">
    <property type="expression patterns" value="baseline and differential"/>
</dbReference>
<dbReference type="GO" id="GO:0005737">
    <property type="term" value="C:cytoplasm"/>
    <property type="evidence" value="ECO:0000314"/>
    <property type="project" value="UniProtKB"/>
</dbReference>
<dbReference type="GO" id="GO:0005654">
    <property type="term" value="C:nucleoplasm"/>
    <property type="evidence" value="ECO:0000304"/>
    <property type="project" value="Reactome"/>
</dbReference>
<dbReference type="GO" id="GO:0005634">
    <property type="term" value="C:nucleus"/>
    <property type="evidence" value="ECO:0000314"/>
    <property type="project" value="UniProtKB"/>
</dbReference>
<dbReference type="GO" id="GO:0035800">
    <property type="term" value="F:deubiquitinase activator activity"/>
    <property type="evidence" value="ECO:0000314"/>
    <property type="project" value="UniProtKB"/>
</dbReference>
<dbReference type="FunFam" id="2.130.10.10:FF:000101">
    <property type="entry name" value="WD repeat-containing protein 20 isoform X1"/>
    <property type="match status" value="1"/>
</dbReference>
<dbReference type="Gene3D" id="2.130.10.10">
    <property type="entry name" value="YVTN repeat-like/Quinoprotein amine dehydrogenase"/>
    <property type="match status" value="1"/>
</dbReference>
<dbReference type="InterPro" id="IPR015943">
    <property type="entry name" value="WD40/YVTN_repeat-like_dom_sf"/>
</dbReference>
<dbReference type="InterPro" id="IPR036322">
    <property type="entry name" value="WD40_repeat_dom_sf"/>
</dbReference>
<dbReference type="InterPro" id="IPR001680">
    <property type="entry name" value="WD40_rpt"/>
</dbReference>
<dbReference type="InterPro" id="IPR051362">
    <property type="entry name" value="WD_repeat_creC_regulators"/>
</dbReference>
<dbReference type="PANTHER" id="PTHR14107">
    <property type="entry name" value="WD REPEAT PROTEIN"/>
    <property type="match status" value="1"/>
</dbReference>
<dbReference type="PANTHER" id="PTHR14107:SF5">
    <property type="entry name" value="WD REPEAT-CONTAINING PROTEIN 20"/>
    <property type="match status" value="1"/>
</dbReference>
<dbReference type="Pfam" id="PF00400">
    <property type="entry name" value="WD40"/>
    <property type="match status" value="2"/>
</dbReference>
<dbReference type="SMART" id="SM00320">
    <property type="entry name" value="WD40"/>
    <property type="match status" value="4"/>
</dbReference>
<dbReference type="SUPFAM" id="SSF50978">
    <property type="entry name" value="WD40 repeat-like"/>
    <property type="match status" value="1"/>
</dbReference>
<dbReference type="PROSITE" id="PS50082">
    <property type="entry name" value="WD_REPEATS_2"/>
    <property type="match status" value="1"/>
</dbReference>
<dbReference type="PROSITE" id="PS50294">
    <property type="entry name" value="WD_REPEATS_REGION"/>
    <property type="match status" value="1"/>
</dbReference>
<proteinExistence type="evidence at protein level"/>
<sequence>MATEGGGKEMNEIKTQFTTREGLYKLLPHSEYSRPNRVPFNSQGSNPVRVSFVNLNDQSGNGDRLCFNVGRELYFYIYKGVRKAADLSKPIDKRIYKGTQPTCHDFNHLTATAESVSLLVGFSAGQVQLIDPIKKETSKLFNEERLIDKSRVTCVKWVPGSESLFLVAHSSGNMYLYNVEHTCGTTAPHYQLLKQGESFAVHTCKSKSTRNPLLKWTVGEGALNEFAFSPDGKFLACVSQDGFLRVFNFDSVELHGTMKSYFGGLLCVCWSPDGKYIVTGGEDDLVTVWSFVDCRVIARGHGHKSWVSVVAFDPYTTSVEEGDPMEFSGSDEDFQDLLHFGRDRANSTQSRLSKRNSTDSRPVSVTYRFGSVGQDTQLCLWDLTEDILFPHQPLSRARTHTNVMNATSPPAGSNGNSVTTPGNSVPPPLPRSNSLPHSAVSNAGSKSSVMDGAIASGVSKFATLSLHDRKERHHEKDHKRNHSMGHISSKSSDKLNLVTKTKTDPAKTLGTPLCPRMEDVPLLEPLICKKIAHERLTVLIFLEDCIVTACQEGFICTWGRPGKVVSFNP</sequence>
<gene>
    <name type="primary">WDR20</name>
</gene>
<organism>
    <name type="scientific">Homo sapiens</name>
    <name type="common">Human</name>
    <dbReference type="NCBI Taxonomy" id="9606"/>
    <lineage>
        <taxon>Eukaryota</taxon>
        <taxon>Metazoa</taxon>
        <taxon>Chordata</taxon>
        <taxon>Craniata</taxon>
        <taxon>Vertebrata</taxon>
        <taxon>Euteleostomi</taxon>
        <taxon>Mammalia</taxon>
        <taxon>Eutheria</taxon>
        <taxon>Euarchontoglires</taxon>
        <taxon>Primates</taxon>
        <taxon>Haplorrhini</taxon>
        <taxon>Catarrhini</taxon>
        <taxon>Hominidae</taxon>
        <taxon>Homo</taxon>
    </lineage>
</organism>
<protein>
    <recommendedName>
        <fullName>WD repeat-containing protein 20</fullName>
    </recommendedName>
    <alternativeName>
        <fullName>Protein DMR</fullName>
    </alternativeName>
</protein>
<name>WDR20_HUMAN</name>
<feature type="initiator methionine" description="Removed" evidence="17">
    <location>
        <position position="1"/>
    </location>
</feature>
<feature type="chain" id="PRO_0000051366" description="WD repeat-containing protein 20">
    <location>
        <begin position="2"/>
        <end position="569"/>
    </location>
</feature>
<feature type="repeat" description="WD 1">
    <location>
        <begin position="94"/>
        <end position="138"/>
    </location>
</feature>
<feature type="repeat" description="WD 2">
    <location>
        <begin position="139"/>
        <end position="210"/>
    </location>
</feature>
<feature type="repeat" description="WD 3">
    <location>
        <begin position="211"/>
        <end position="252"/>
    </location>
</feature>
<feature type="repeat" description="WD 4">
    <location>
        <begin position="253"/>
        <end position="331"/>
    </location>
</feature>
<feature type="repeat" description="WD 5">
    <location>
        <begin position="332"/>
        <end position="426"/>
    </location>
</feature>
<feature type="repeat" description="WD 6">
    <location>
        <begin position="427"/>
        <end position="523"/>
    </location>
</feature>
<feature type="repeat" description="WD 7">
    <location>
        <begin position="524"/>
        <end position="559"/>
    </location>
</feature>
<feature type="region of interest" description="Disordered" evidence="1">
    <location>
        <begin position="405"/>
        <end position="445"/>
    </location>
</feature>
<feature type="region of interest" description="Mediates XPO1-dependent nuclear export of WDR20-USP12 complexes" evidence="5">
    <location>
        <begin position="450"/>
        <end position="468"/>
    </location>
</feature>
<feature type="compositionally biased region" description="Polar residues" evidence="1">
    <location>
        <begin position="405"/>
        <end position="423"/>
    </location>
</feature>
<feature type="compositionally biased region" description="Polar residues" evidence="1">
    <location>
        <begin position="431"/>
        <end position="445"/>
    </location>
</feature>
<feature type="modified residue" description="N-acetylalanine" evidence="17">
    <location>
        <position position="2"/>
    </location>
</feature>
<feature type="modified residue" description="Phosphoserine" evidence="18">
    <location>
        <position position="357"/>
    </location>
</feature>
<feature type="modified residue" description="Phosphoserine" evidence="18">
    <location>
        <position position="360"/>
    </location>
</feature>
<feature type="modified residue" description="Phosphoserine" evidence="14 16">
    <location>
        <position position="432"/>
    </location>
</feature>
<feature type="modified residue" description="Phosphoserine" evidence="14 15 18">
    <location>
        <position position="434"/>
    </location>
</feature>
<feature type="modified residue" description="Phosphoserine" evidence="18">
    <location>
        <position position="465"/>
    </location>
</feature>
<feature type="splice variant" id="VSP_045225" description="In isoform 4." evidence="9">
    <location>
        <begin position="1"/>
        <end position="9"/>
    </location>
</feature>
<feature type="splice variant" id="VSP_047064" description="In isoform 8." evidence="11">
    <original>AADLSKPIDKRIYKGTQPTCHDFNHLTATAESVSLLVGFSAGQVQLIDPIKKETSKLFNEERLIDKSRVTCVKWVPGSESLFLVAHSSGNMYLYNVEHTCGTTAPHYQLLKQGESFAVHTCKSKSTRNPLLKWTVGEGALNEFAFSPDGKFLACVSQDGFLRVFNFDSVELHGTMKSYFGGLLCVCWSPDGKYIVTGGEDDLVTVWSFVDCRVIARGHGHKSWVSVVAFDPYTTSVEEGDPMEFSGSDEDFQDLLHFGRDRANSTQSRLSKRNSTDSRPVSVTYRFGSVGQDTQLCLWDLTEDILFPHQPLSRARTHTNVMNATSPPAGSNGNSVTTPGNSVPPPLPRSNSLPHSAVSNAGSKSSVMDGAIASGVSKFATLSLHDRKERHHEKDHKRNHSMGHISSKSSDKLNLVTKTKTDPAKTLGTPLCPRMEDVPLLEPLICKKIAHERLTVLIFLEDCIVTACQEGFICTWGRPGKVVSFNP</original>
    <variation>TIP</variation>
    <location>
        <begin position="84"/>
        <end position="569"/>
    </location>
</feature>
<feature type="splice variant" id="VSP_045226" description="In isoform 4, isoform 5 and isoform 6." evidence="9">
    <location>
        <begin position="84"/>
        <end position="144"/>
    </location>
</feature>
<feature type="splice variant" id="VSP_047065" description="In isoform 7." evidence="7">
    <original>E</original>
    <variation>ENSCQHLWKVDWNEERQNEGSKTSEEALVTVQ</variation>
    <location>
        <position position="144"/>
    </location>
</feature>
<feature type="splice variant" id="VSP_043412" description="In isoform 3." evidence="8">
    <original>RLIDKSRVTCVKWVPGSESLFLVAHSSGNMYLYNVEHTCGTTAPHYQLLKQ</original>
    <variation>NSCQHLWKVDWNEERQNEGSKTSEEALVTVQPAEHFCRQEDRMQGVLQDQN</variation>
    <location>
        <begin position="145"/>
        <end position="195"/>
    </location>
</feature>
<feature type="splice variant" id="VSP_043413" description="In isoform 3." evidence="8">
    <location>
        <begin position="196"/>
        <end position="569"/>
    </location>
</feature>
<feature type="splice variant" id="VSP_024387" description="In isoform 2 and isoform 6." evidence="10">
    <original>VSFNP</original>
    <variation>GSLSSPSQASSPGGTVV</variation>
    <location>
        <begin position="565"/>
        <end position="569"/>
    </location>
</feature>
<feature type="sequence variant" id="VAR_031580" description="In dbSNP:rs17852545." evidence="2">
    <original>P</original>
    <variation>H</variation>
    <location>
        <position position="159"/>
    </location>
</feature>
<feature type="sequence variant" id="VAR_053425" description="In dbSNP:rs12888595.">
    <original>G</original>
    <variation>C</variation>
    <location>
        <position position="444"/>
    </location>
</feature>
<feature type="mutagenesis site" description="Impaired binding to USP12. Does not induce plasma localization of USP12; when associated with A-306." evidence="4 5">
    <original>F</original>
    <variation>A</variation>
    <location>
        <position position="262"/>
    </location>
</feature>
<feature type="mutagenesis site" description="Impaired binding to USP12. Does not induce plasma localization of USP12; when associated with A-262." evidence="4 5">
    <original>W</original>
    <variation>A</variation>
    <location>
        <position position="306"/>
    </location>
</feature>
<feature type="mutagenesis site" description="Induces partial relocation of WDR20 from the cytoplasm to the nucleus; when associated with A-466." evidence="5">
    <original>L</original>
    <variation>A</variation>
    <location>
        <position position="464"/>
    </location>
</feature>
<feature type="mutagenesis site" description="Induces partial relocation of WDR20 from the cytoplasm to the nucleus; when associated with A-464." evidence="5">
    <original>L</original>
    <variation>A</variation>
    <location>
        <position position="466"/>
    </location>
</feature>
<feature type="sequence conflict" description="In Ref. 5; AAL56014." evidence="11" ref="5">
    <original>Q</original>
    <variation>H</variation>
    <location>
        <position position="195"/>
    </location>
</feature>
<feature type="sequence conflict" description="In Ref. 5; AAL56014." evidence="11" ref="5">
    <original>R</original>
    <variation>K</variation>
    <location>
        <position position="299"/>
    </location>
</feature>
<feature type="sequence conflict" description="In Ref. 2; BAG60080." evidence="11" ref="2">
    <original>L</original>
    <variation>P</variation>
    <location>
        <position position="337"/>
    </location>
</feature>
<feature type="sequence conflict" description="In Ref. 2; BAG60080." evidence="11" ref="2">
    <original>S</original>
    <variation>P</variation>
    <location>
        <position position="353"/>
    </location>
</feature>
<feature type="sequence conflict" description="In Ref. 6; CAB63713." evidence="11" ref="6">
    <original>H</original>
    <variation>L</variation>
    <location>
        <position position="474"/>
    </location>
</feature>
<feature type="strand" evidence="19">
    <location>
        <begin position="15"/>
        <end position="19"/>
    </location>
</feature>
<feature type="strand" evidence="19">
    <location>
        <begin position="22"/>
        <end position="26"/>
    </location>
</feature>
<feature type="helix" evidence="19">
    <location>
        <begin position="28"/>
        <end position="30"/>
    </location>
</feature>
<feature type="strand" evidence="19">
    <location>
        <begin position="50"/>
        <end position="54"/>
    </location>
</feature>
<feature type="strand" evidence="20">
    <location>
        <begin position="58"/>
        <end position="60"/>
    </location>
</feature>
<feature type="strand" evidence="19">
    <location>
        <begin position="63"/>
        <end position="68"/>
    </location>
</feature>
<feature type="strand" evidence="19">
    <location>
        <begin position="70"/>
        <end position="77"/>
    </location>
</feature>
<feature type="strand" evidence="19">
    <location>
        <begin position="91"/>
        <end position="95"/>
    </location>
</feature>
<feature type="strand" evidence="19">
    <location>
        <begin position="97"/>
        <end position="99"/>
    </location>
</feature>
<feature type="strand" evidence="19">
    <location>
        <begin position="101"/>
        <end position="106"/>
    </location>
</feature>
<feature type="turn" evidence="19">
    <location>
        <begin position="108"/>
        <end position="110"/>
    </location>
</feature>
<feature type="strand" evidence="19">
    <location>
        <begin position="118"/>
        <end position="122"/>
    </location>
</feature>
<feature type="strand" evidence="19">
    <location>
        <begin position="127"/>
        <end position="130"/>
    </location>
</feature>
<feature type="turn" evidence="19">
    <location>
        <begin position="132"/>
        <end position="134"/>
    </location>
</feature>
<feature type="strand" evidence="19">
    <location>
        <begin position="138"/>
        <end position="142"/>
    </location>
</feature>
<feature type="strand" evidence="19">
    <location>
        <begin position="152"/>
        <end position="157"/>
    </location>
</feature>
<feature type="strand" evidence="19">
    <location>
        <begin position="162"/>
        <end position="169"/>
    </location>
</feature>
<feature type="strand" evidence="19">
    <location>
        <begin position="172"/>
        <end position="178"/>
    </location>
</feature>
<feature type="strand" evidence="19">
    <location>
        <begin position="190"/>
        <end position="196"/>
    </location>
</feature>
<feature type="strand" evidence="19">
    <location>
        <begin position="199"/>
        <end position="204"/>
    </location>
</feature>
<feature type="strand" evidence="19">
    <location>
        <begin position="210"/>
        <end position="221"/>
    </location>
</feature>
<feature type="strand" evidence="19">
    <location>
        <begin position="223"/>
        <end position="228"/>
    </location>
</feature>
<feature type="strand" evidence="19">
    <location>
        <begin position="232"/>
        <end position="239"/>
    </location>
</feature>
<feature type="strand" evidence="19">
    <location>
        <begin position="242"/>
        <end position="248"/>
    </location>
</feature>
<feature type="turn" evidence="19">
    <location>
        <begin position="249"/>
        <end position="252"/>
    </location>
</feature>
<feature type="strand" evidence="19">
    <location>
        <begin position="253"/>
        <end position="259"/>
    </location>
</feature>
<feature type="strand" evidence="19">
    <location>
        <begin position="261"/>
        <end position="263"/>
    </location>
</feature>
<feature type="strand" evidence="19">
    <location>
        <begin position="265"/>
        <end position="270"/>
    </location>
</feature>
<feature type="strand" evidence="19">
    <location>
        <begin position="274"/>
        <end position="281"/>
    </location>
</feature>
<feature type="strand" evidence="19">
    <location>
        <begin position="286"/>
        <end position="290"/>
    </location>
</feature>
<feature type="turn" evidence="19">
    <location>
        <begin position="291"/>
        <end position="293"/>
    </location>
</feature>
<feature type="strand" evidence="19">
    <location>
        <begin position="295"/>
        <end position="300"/>
    </location>
</feature>
<feature type="strand" evidence="19">
    <location>
        <begin position="307"/>
        <end position="312"/>
    </location>
</feature>
<feature type="helix" evidence="20">
    <location>
        <begin position="314"/>
        <end position="316"/>
    </location>
</feature>
<feature type="strand" evidence="19">
    <location>
        <begin position="366"/>
        <end position="373"/>
    </location>
</feature>
<feature type="strand" evidence="19">
    <location>
        <begin position="376"/>
        <end position="384"/>
    </location>
</feature>
<feature type="helix" evidence="19">
    <location>
        <begin position="385"/>
        <end position="388"/>
    </location>
</feature>
<feature type="strand" evidence="20">
    <location>
        <begin position="512"/>
        <end position="514"/>
    </location>
</feature>
<feature type="turn" evidence="20">
    <location>
        <begin position="517"/>
        <end position="519"/>
    </location>
</feature>
<feature type="strand" evidence="19">
    <location>
        <begin position="526"/>
        <end position="530"/>
    </location>
</feature>
<feature type="strand" evidence="19">
    <location>
        <begin position="536"/>
        <end position="541"/>
    </location>
</feature>
<feature type="strand" evidence="19">
    <location>
        <begin position="543"/>
        <end position="550"/>
    </location>
</feature>
<feature type="strand" evidence="19">
    <location>
        <begin position="555"/>
        <end position="559"/>
    </location>
</feature>
<comment type="function">
    <text evidence="3 4 5">Regulator of deubiquitinating complexes. Activates deubiquitinating activity of complexes containing USP12 (PubMed:20147737, PubMed:27373336). Anchors at the base of the ubiquitin-contacting loop of USP12 and remotely modulates the catalytic center of the enzyme (PubMed:27373336). Regulates shuttling of the USP12 deubiquitinase complex between the plasma membrane, cytoplasm and nucleus (PubMed:30466959).</text>
</comment>
<comment type="subunit">
    <text evidence="3 4 5 6">Interacts with USP12; promotes translocation of USP12/WDR20 to the plasma membrane (PubMed:20147737, PubMed:27373336, PubMed:30466959). Component of the USP12/WDR20/WDR48 deubiquitinating complex (PubMed:20147737, PubMed:27373336). Interacts with USP46; contributes to the cytoplasmic localization of the USP46/WDR20 complex (PubMed:20147737). Component of the USP12/DMWD/WDR48 deubiquitinating complex (PubMed:33844468).</text>
</comment>
<comment type="interaction">
    <interactant intactId="EBI-2511486">
        <id>Q8TBZ3</id>
    </interactant>
    <interactant intactId="EBI-3918199">
        <id>Q9UN19</id>
        <label>DAPP1</label>
    </interactant>
    <organismsDiffer>false</organismsDiffer>
    <experiments>3</experiments>
</comment>
<comment type="interaction">
    <interactant intactId="EBI-2511486">
        <id>Q8TBZ3</id>
    </interactant>
    <interactant intactId="EBI-2511507">
        <id>O75317</id>
        <label>USP12</label>
    </interactant>
    <organismsDiffer>false</organismsDiffer>
    <experiments>6</experiments>
</comment>
<comment type="interaction">
    <interactant intactId="EBI-2511486">
        <id>Q8TBZ3</id>
    </interactant>
    <interactant intactId="EBI-2512753">
        <id>P62068</id>
        <label>USP46</label>
    </interactant>
    <organismsDiffer>false</organismsDiffer>
    <experiments>8</experiments>
</comment>
<comment type="interaction">
    <interactant intactId="EBI-9089370">
        <id>Q8TBZ3-3</id>
    </interactant>
    <interactant intactId="EBI-348399">
        <id>P22607</id>
        <label>FGFR3</label>
    </interactant>
    <organismsDiffer>false</organismsDiffer>
    <experiments>3</experiments>
</comment>
<comment type="interaction">
    <interactant intactId="EBI-9089370">
        <id>Q8TBZ3-3</id>
    </interactant>
    <interactant intactId="EBI-351506">
        <id>P06396</id>
        <label>GSN</label>
    </interactant>
    <organismsDiffer>false</organismsDiffer>
    <experiments>3</experiments>
</comment>
<comment type="subcellular location">
    <subcellularLocation>
        <location evidence="5 6">Cytoplasm</location>
    </subcellularLocation>
    <subcellularLocation>
        <location evidence="5 6">Nucleus</location>
    </subcellularLocation>
</comment>
<comment type="alternative products">
    <event type="alternative splicing"/>
    <isoform>
        <id>Q8TBZ3-1</id>
        <name>1</name>
        <sequence type="displayed"/>
    </isoform>
    <isoform>
        <id>Q8TBZ3-2</id>
        <name>2</name>
        <sequence type="described" ref="VSP_024387"/>
    </isoform>
    <isoform>
        <id>Q8TBZ3-3</id>
        <name>3</name>
        <sequence type="described" ref="VSP_043412 VSP_043413"/>
    </isoform>
    <isoform>
        <id>Q8TBZ3-4</id>
        <name>4</name>
        <sequence type="described" ref="VSP_045225 VSP_045226"/>
    </isoform>
    <isoform>
        <id>Q8TBZ3-5</id>
        <name>5</name>
        <sequence type="described" ref="VSP_045226"/>
    </isoform>
    <isoform>
        <id>Q8TBZ3-6</id>
        <name>6</name>
        <sequence type="described" ref="VSP_045226 VSP_024387"/>
    </isoform>
    <isoform>
        <id>Q8TBZ3-7</id>
        <name>7</name>
        <sequence type="described" ref="VSP_047065"/>
    </isoform>
    <isoform>
        <id>Q8TBZ3-8</id>
        <name>8</name>
        <sequence type="described" ref="VSP_047064"/>
    </isoform>
</comment>
<comment type="sequence caution" evidence="11">
    <conflict type="erroneous initiation">
        <sequence resource="EMBL-CDS" id="AAL56014"/>
    </conflict>
</comment>